<comment type="function">
    <text evidence="1">NDH-1 shuttles electrons from NADH, via FMN and iron-sulfur (Fe-S) centers, to quinones in the respiratory chain. The immediate electron acceptor for the enzyme in this species is believed to be a menaquinone. Couples the redox reaction to proton translocation (for every two electrons transferred, four hydrogen ions are translocated across the cytoplasmic membrane), and thus conserves the redox energy in a proton gradient.</text>
</comment>
<comment type="catalytic activity">
    <reaction evidence="1">
        <text>a quinone + NADH + 5 H(+)(in) = a quinol + NAD(+) + 4 H(+)(out)</text>
        <dbReference type="Rhea" id="RHEA:57888"/>
        <dbReference type="ChEBI" id="CHEBI:15378"/>
        <dbReference type="ChEBI" id="CHEBI:24646"/>
        <dbReference type="ChEBI" id="CHEBI:57540"/>
        <dbReference type="ChEBI" id="CHEBI:57945"/>
        <dbReference type="ChEBI" id="CHEBI:132124"/>
    </reaction>
</comment>
<comment type="cofactor">
    <cofactor evidence="1">
        <name>[4Fe-4S] cluster</name>
        <dbReference type="ChEBI" id="CHEBI:49883"/>
    </cofactor>
    <text evidence="1">Binds 1 [4Fe-4S] cluster.</text>
</comment>
<comment type="subunit">
    <text evidence="1">NDH-1 is composed of 14 different subunits. Subunits NuoB, C, D, E, F, and G constitute the peripheral sector of the complex.</text>
</comment>
<comment type="subcellular location">
    <subcellularLocation>
        <location evidence="1">Cell membrane</location>
        <topology evidence="1">Peripheral membrane protein</topology>
        <orientation evidence="1">Cytoplasmic side</orientation>
    </subcellularLocation>
</comment>
<comment type="similarity">
    <text evidence="1">Belongs to the complex I 20 kDa subunit family.</text>
</comment>
<sequence length="226" mass="25331">MGIEEKLPAGVLLTSVEKLVNWSRKSSVWGATFGLACCAIEMMAAGGPHYDMGRWGMEVFRASPRQADLMIVAGRVSQKMAPVLRQIYDQMAEPRWVLSMGVCASSGGMFNNYAIVQGVDHVVPVDMYLPGCPPRPEMLIDAVLKLREKIMHEPLGPNGRKMLEARKARGDVPVVPYGSMPSSYRSDKARRAEWTKAVREGREEQLRIENWMKAQPHLQQYEGLKK</sequence>
<dbReference type="EC" id="7.1.1.-" evidence="1"/>
<dbReference type="EMBL" id="CP000850">
    <property type="protein sequence ID" value="ABW00237.1"/>
    <property type="molecule type" value="Genomic_DNA"/>
</dbReference>
<dbReference type="SMR" id="A8M621"/>
<dbReference type="STRING" id="391037.Sare_4462"/>
<dbReference type="KEGG" id="saq:Sare_4462"/>
<dbReference type="PATRIC" id="fig|391037.6.peg.4506"/>
<dbReference type="eggNOG" id="COG0377">
    <property type="taxonomic scope" value="Bacteria"/>
</dbReference>
<dbReference type="HOGENOM" id="CLU_055737_7_3_11"/>
<dbReference type="OrthoDB" id="9786737at2"/>
<dbReference type="GO" id="GO:0005886">
    <property type="term" value="C:plasma membrane"/>
    <property type="evidence" value="ECO:0007669"/>
    <property type="project" value="UniProtKB-SubCell"/>
</dbReference>
<dbReference type="GO" id="GO:0045271">
    <property type="term" value="C:respiratory chain complex I"/>
    <property type="evidence" value="ECO:0007669"/>
    <property type="project" value="TreeGrafter"/>
</dbReference>
<dbReference type="GO" id="GO:0051539">
    <property type="term" value="F:4 iron, 4 sulfur cluster binding"/>
    <property type="evidence" value="ECO:0007669"/>
    <property type="project" value="UniProtKB-KW"/>
</dbReference>
<dbReference type="GO" id="GO:0005506">
    <property type="term" value="F:iron ion binding"/>
    <property type="evidence" value="ECO:0007669"/>
    <property type="project" value="UniProtKB-UniRule"/>
</dbReference>
<dbReference type="GO" id="GO:0008137">
    <property type="term" value="F:NADH dehydrogenase (ubiquinone) activity"/>
    <property type="evidence" value="ECO:0007669"/>
    <property type="project" value="InterPro"/>
</dbReference>
<dbReference type="GO" id="GO:0050136">
    <property type="term" value="F:NADH:ubiquinone reductase (non-electrogenic) activity"/>
    <property type="evidence" value="ECO:0007669"/>
    <property type="project" value="UniProtKB-UniRule"/>
</dbReference>
<dbReference type="GO" id="GO:0048038">
    <property type="term" value="F:quinone binding"/>
    <property type="evidence" value="ECO:0007669"/>
    <property type="project" value="UniProtKB-KW"/>
</dbReference>
<dbReference type="GO" id="GO:0009060">
    <property type="term" value="P:aerobic respiration"/>
    <property type="evidence" value="ECO:0007669"/>
    <property type="project" value="TreeGrafter"/>
</dbReference>
<dbReference type="GO" id="GO:0015990">
    <property type="term" value="P:electron transport coupled proton transport"/>
    <property type="evidence" value="ECO:0007669"/>
    <property type="project" value="TreeGrafter"/>
</dbReference>
<dbReference type="FunFam" id="3.40.50.12280:FF:000004">
    <property type="entry name" value="NADH-quinone oxidoreductase subunit B"/>
    <property type="match status" value="1"/>
</dbReference>
<dbReference type="Gene3D" id="3.40.50.12280">
    <property type="match status" value="1"/>
</dbReference>
<dbReference type="HAMAP" id="MF_01356">
    <property type="entry name" value="NDH1_NuoB"/>
    <property type="match status" value="1"/>
</dbReference>
<dbReference type="InterPro" id="IPR006137">
    <property type="entry name" value="NADH_UbQ_OxRdtase-like_20kDa"/>
</dbReference>
<dbReference type="InterPro" id="IPR006138">
    <property type="entry name" value="NADH_UQ_OxRdtase_20Kd_su"/>
</dbReference>
<dbReference type="NCBIfam" id="TIGR01957">
    <property type="entry name" value="nuoB_fam"/>
    <property type="match status" value="1"/>
</dbReference>
<dbReference type="NCBIfam" id="NF005012">
    <property type="entry name" value="PRK06411.1"/>
    <property type="match status" value="1"/>
</dbReference>
<dbReference type="PANTHER" id="PTHR11995">
    <property type="entry name" value="NADH DEHYDROGENASE"/>
    <property type="match status" value="1"/>
</dbReference>
<dbReference type="PANTHER" id="PTHR11995:SF14">
    <property type="entry name" value="NADH DEHYDROGENASE [UBIQUINONE] IRON-SULFUR PROTEIN 7, MITOCHONDRIAL"/>
    <property type="match status" value="1"/>
</dbReference>
<dbReference type="Pfam" id="PF01058">
    <property type="entry name" value="Oxidored_q6"/>
    <property type="match status" value="1"/>
</dbReference>
<dbReference type="SUPFAM" id="SSF56770">
    <property type="entry name" value="HydA/Nqo6-like"/>
    <property type="match status" value="1"/>
</dbReference>
<dbReference type="PROSITE" id="PS01150">
    <property type="entry name" value="COMPLEX1_20K"/>
    <property type="match status" value="1"/>
</dbReference>
<keyword id="KW-0004">4Fe-4S</keyword>
<keyword id="KW-1003">Cell membrane</keyword>
<keyword id="KW-0408">Iron</keyword>
<keyword id="KW-0411">Iron-sulfur</keyword>
<keyword id="KW-0472">Membrane</keyword>
<keyword id="KW-0479">Metal-binding</keyword>
<keyword id="KW-0520">NAD</keyword>
<keyword id="KW-0874">Quinone</keyword>
<keyword id="KW-1278">Translocase</keyword>
<keyword id="KW-0813">Transport</keyword>
<evidence type="ECO:0000255" key="1">
    <source>
        <dbReference type="HAMAP-Rule" id="MF_01356"/>
    </source>
</evidence>
<accession>A8M621</accession>
<proteinExistence type="inferred from homology"/>
<organism>
    <name type="scientific">Salinispora arenicola (strain CNS-205)</name>
    <dbReference type="NCBI Taxonomy" id="391037"/>
    <lineage>
        <taxon>Bacteria</taxon>
        <taxon>Bacillati</taxon>
        <taxon>Actinomycetota</taxon>
        <taxon>Actinomycetes</taxon>
        <taxon>Micromonosporales</taxon>
        <taxon>Micromonosporaceae</taxon>
        <taxon>Salinispora</taxon>
    </lineage>
</organism>
<feature type="chain" id="PRO_0000376356" description="NADH-quinone oxidoreductase subunit B 2">
    <location>
        <begin position="1"/>
        <end position="226"/>
    </location>
</feature>
<feature type="binding site" evidence="1">
    <location>
        <position position="37"/>
    </location>
    <ligand>
        <name>[4Fe-4S] cluster</name>
        <dbReference type="ChEBI" id="CHEBI:49883"/>
    </ligand>
</feature>
<feature type="binding site" evidence="1">
    <location>
        <position position="38"/>
    </location>
    <ligand>
        <name>[4Fe-4S] cluster</name>
        <dbReference type="ChEBI" id="CHEBI:49883"/>
    </ligand>
</feature>
<feature type="binding site" evidence="1">
    <location>
        <position position="103"/>
    </location>
    <ligand>
        <name>[4Fe-4S] cluster</name>
        <dbReference type="ChEBI" id="CHEBI:49883"/>
    </ligand>
</feature>
<feature type="binding site" evidence="1">
    <location>
        <position position="132"/>
    </location>
    <ligand>
        <name>[4Fe-4S] cluster</name>
        <dbReference type="ChEBI" id="CHEBI:49883"/>
    </ligand>
</feature>
<reference key="1">
    <citation type="submission" date="2007-10" db="EMBL/GenBank/DDBJ databases">
        <title>Complete sequence of Salinispora arenicola CNS-205.</title>
        <authorList>
            <consortium name="US DOE Joint Genome Institute"/>
            <person name="Copeland A."/>
            <person name="Lucas S."/>
            <person name="Lapidus A."/>
            <person name="Barry K."/>
            <person name="Glavina del Rio T."/>
            <person name="Dalin E."/>
            <person name="Tice H."/>
            <person name="Pitluck S."/>
            <person name="Foster B."/>
            <person name="Schmutz J."/>
            <person name="Larimer F."/>
            <person name="Land M."/>
            <person name="Hauser L."/>
            <person name="Kyrpides N."/>
            <person name="Ivanova N."/>
            <person name="Jensen P.R."/>
            <person name="Moore B.S."/>
            <person name="Penn K."/>
            <person name="Jenkins C."/>
            <person name="Udwary D."/>
            <person name="Xiang L."/>
            <person name="Gontang E."/>
            <person name="Richardson P."/>
        </authorList>
    </citation>
    <scope>NUCLEOTIDE SEQUENCE [LARGE SCALE GENOMIC DNA]</scope>
    <source>
        <strain>CNS-205</strain>
    </source>
</reference>
<name>NUOB2_SALAI</name>
<gene>
    <name evidence="1" type="primary">nuoB2</name>
    <name type="ordered locus">Sare_4462</name>
</gene>
<protein>
    <recommendedName>
        <fullName evidence="1">NADH-quinone oxidoreductase subunit B 2</fullName>
        <ecNumber evidence="1">7.1.1.-</ecNumber>
    </recommendedName>
    <alternativeName>
        <fullName evidence="1">NADH dehydrogenase I subunit B 2</fullName>
    </alternativeName>
    <alternativeName>
        <fullName evidence="1">NDH-1 subunit B 2</fullName>
    </alternativeName>
</protein>